<organism>
    <name type="scientific">Prochlorococcus marinus (strain MIT 9301)</name>
    <dbReference type="NCBI Taxonomy" id="167546"/>
    <lineage>
        <taxon>Bacteria</taxon>
        <taxon>Bacillati</taxon>
        <taxon>Cyanobacteriota</taxon>
        <taxon>Cyanophyceae</taxon>
        <taxon>Synechococcales</taxon>
        <taxon>Prochlorococcaceae</taxon>
        <taxon>Prochlorococcus</taxon>
    </lineage>
</organism>
<gene>
    <name evidence="1" type="primary">gcvT</name>
    <name type="ordered locus">P9301_18781</name>
</gene>
<evidence type="ECO:0000255" key="1">
    <source>
        <dbReference type="HAMAP-Rule" id="MF_00259"/>
    </source>
</evidence>
<proteinExistence type="inferred from homology"/>
<name>GCST_PROM0</name>
<feature type="chain" id="PRO_1000047686" description="Aminomethyltransferase">
    <location>
        <begin position="1"/>
        <end position="370"/>
    </location>
</feature>
<comment type="function">
    <text evidence="1">The glycine cleavage system catalyzes the degradation of glycine.</text>
</comment>
<comment type="catalytic activity">
    <reaction evidence="1">
        <text>N(6)-[(R)-S(8)-aminomethyldihydrolipoyl]-L-lysyl-[protein] + (6S)-5,6,7,8-tetrahydrofolate = N(6)-[(R)-dihydrolipoyl]-L-lysyl-[protein] + (6R)-5,10-methylene-5,6,7,8-tetrahydrofolate + NH4(+)</text>
        <dbReference type="Rhea" id="RHEA:16945"/>
        <dbReference type="Rhea" id="RHEA-COMP:10475"/>
        <dbReference type="Rhea" id="RHEA-COMP:10492"/>
        <dbReference type="ChEBI" id="CHEBI:15636"/>
        <dbReference type="ChEBI" id="CHEBI:28938"/>
        <dbReference type="ChEBI" id="CHEBI:57453"/>
        <dbReference type="ChEBI" id="CHEBI:83100"/>
        <dbReference type="ChEBI" id="CHEBI:83143"/>
        <dbReference type="EC" id="2.1.2.10"/>
    </reaction>
</comment>
<comment type="subunit">
    <text evidence="1">The glycine cleavage system is composed of four proteins: P, T, L and H.</text>
</comment>
<comment type="similarity">
    <text evidence="1">Belongs to the GcvT family.</text>
</comment>
<sequence length="370" mass="41870">MDLRKSPLYSKYIESNAKLVDFAGWEMPISFSGLIKEHESVRSSAGLFDISHMGVISVKGINPKDYIQKFFPTNLYSFSEGQGLYTVMLNDKGGIIDDLIIYDLGIQENDITELLLIVNASRYEEDFQWIKNNLNKDEISITNFKKAKVLLALQGKKSFDLFEEWIDSSISHIPNFGCEYKIFEHISPKEKIFFSKTGYTGENGLEILLSKKAAINLWDFSISKNVAPCGLGARDTLRLEAGMHLYGQDINEETSPYEAGLGWLVHLENNHEFFGRRFLEEQSRLGIQKKLVGLFIEGKAIGRKGCTVLKGEENIGTITSGSWSPTKQQAIAFAYINTSHALINNEVQVLIRGKKFKGVITKRAFYKKNY</sequence>
<reference key="1">
    <citation type="journal article" date="2007" name="PLoS Genet.">
        <title>Patterns and implications of gene gain and loss in the evolution of Prochlorococcus.</title>
        <authorList>
            <person name="Kettler G.C."/>
            <person name="Martiny A.C."/>
            <person name="Huang K."/>
            <person name="Zucker J."/>
            <person name="Coleman M.L."/>
            <person name="Rodrigue S."/>
            <person name="Chen F."/>
            <person name="Lapidus A."/>
            <person name="Ferriera S."/>
            <person name="Johnson J."/>
            <person name="Steglich C."/>
            <person name="Church G.M."/>
            <person name="Richardson P."/>
            <person name="Chisholm S.W."/>
        </authorList>
    </citation>
    <scope>NUCLEOTIDE SEQUENCE [LARGE SCALE GENOMIC DNA]</scope>
    <source>
        <strain>MIT 9301</strain>
    </source>
</reference>
<keyword id="KW-0032">Aminotransferase</keyword>
<keyword id="KW-1185">Reference proteome</keyword>
<keyword id="KW-0808">Transferase</keyword>
<dbReference type="EC" id="2.1.2.10" evidence="1"/>
<dbReference type="EMBL" id="CP000576">
    <property type="protein sequence ID" value="ABO18501.1"/>
    <property type="molecule type" value="Genomic_DNA"/>
</dbReference>
<dbReference type="RefSeq" id="WP_011863783.1">
    <property type="nucleotide sequence ID" value="NC_009091.1"/>
</dbReference>
<dbReference type="SMR" id="A3PFH6"/>
<dbReference type="STRING" id="167546.P9301_18781"/>
<dbReference type="KEGG" id="pmg:P9301_18781"/>
<dbReference type="eggNOG" id="COG0404">
    <property type="taxonomic scope" value="Bacteria"/>
</dbReference>
<dbReference type="HOGENOM" id="CLU_007884_10_2_3"/>
<dbReference type="OrthoDB" id="9774591at2"/>
<dbReference type="Proteomes" id="UP000001430">
    <property type="component" value="Chromosome"/>
</dbReference>
<dbReference type="GO" id="GO:0005829">
    <property type="term" value="C:cytosol"/>
    <property type="evidence" value="ECO:0007669"/>
    <property type="project" value="TreeGrafter"/>
</dbReference>
<dbReference type="GO" id="GO:0005960">
    <property type="term" value="C:glycine cleavage complex"/>
    <property type="evidence" value="ECO:0007669"/>
    <property type="project" value="InterPro"/>
</dbReference>
<dbReference type="GO" id="GO:0004047">
    <property type="term" value="F:aminomethyltransferase activity"/>
    <property type="evidence" value="ECO:0007669"/>
    <property type="project" value="UniProtKB-UniRule"/>
</dbReference>
<dbReference type="GO" id="GO:0008483">
    <property type="term" value="F:transaminase activity"/>
    <property type="evidence" value="ECO:0007669"/>
    <property type="project" value="UniProtKB-KW"/>
</dbReference>
<dbReference type="GO" id="GO:0019464">
    <property type="term" value="P:glycine decarboxylation via glycine cleavage system"/>
    <property type="evidence" value="ECO:0007669"/>
    <property type="project" value="UniProtKB-UniRule"/>
</dbReference>
<dbReference type="FunFam" id="2.40.30.110:FF:000003">
    <property type="entry name" value="Aminomethyltransferase"/>
    <property type="match status" value="1"/>
</dbReference>
<dbReference type="FunFam" id="4.10.1250.10:FF:000001">
    <property type="entry name" value="Aminomethyltransferase"/>
    <property type="match status" value="1"/>
</dbReference>
<dbReference type="Gene3D" id="2.40.30.110">
    <property type="entry name" value="Aminomethyltransferase beta-barrel domains"/>
    <property type="match status" value="1"/>
</dbReference>
<dbReference type="Gene3D" id="3.30.70.1400">
    <property type="entry name" value="Aminomethyltransferase beta-barrel domains"/>
    <property type="match status" value="1"/>
</dbReference>
<dbReference type="Gene3D" id="4.10.1250.10">
    <property type="entry name" value="Aminomethyltransferase fragment"/>
    <property type="match status" value="1"/>
</dbReference>
<dbReference type="Gene3D" id="3.30.1360.120">
    <property type="entry name" value="Probable tRNA modification gtpase trme, domain 1"/>
    <property type="match status" value="1"/>
</dbReference>
<dbReference type="HAMAP" id="MF_00259">
    <property type="entry name" value="GcvT"/>
    <property type="match status" value="1"/>
</dbReference>
<dbReference type="InterPro" id="IPR006223">
    <property type="entry name" value="GCS_T"/>
</dbReference>
<dbReference type="InterPro" id="IPR022903">
    <property type="entry name" value="GCS_T_bac"/>
</dbReference>
<dbReference type="InterPro" id="IPR013977">
    <property type="entry name" value="GCST_C"/>
</dbReference>
<dbReference type="InterPro" id="IPR006222">
    <property type="entry name" value="GCV_T_N"/>
</dbReference>
<dbReference type="InterPro" id="IPR028896">
    <property type="entry name" value="GcvT/YgfZ/DmdA"/>
</dbReference>
<dbReference type="InterPro" id="IPR029043">
    <property type="entry name" value="GcvT/YgfZ_C"/>
</dbReference>
<dbReference type="InterPro" id="IPR027266">
    <property type="entry name" value="TrmE/GcvT_dom1"/>
</dbReference>
<dbReference type="NCBIfam" id="TIGR00528">
    <property type="entry name" value="gcvT"/>
    <property type="match status" value="1"/>
</dbReference>
<dbReference type="NCBIfam" id="NF001567">
    <property type="entry name" value="PRK00389.1"/>
    <property type="match status" value="1"/>
</dbReference>
<dbReference type="PANTHER" id="PTHR43757">
    <property type="entry name" value="AMINOMETHYLTRANSFERASE"/>
    <property type="match status" value="1"/>
</dbReference>
<dbReference type="PANTHER" id="PTHR43757:SF2">
    <property type="entry name" value="AMINOMETHYLTRANSFERASE, MITOCHONDRIAL"/>
    <property type="match status" value="1"/>
</dbReference>
<dbReference type="Pfam" id="PF01571">
    <property type="entry name" value="GCV_T"/>
    <property type="match status" value="1"/>
</dbReference>
<dbReference type="Pfam" id="PF08669">
    <property type="entry name" value="GCV_T_C"/>
    <property type="match status" value="1"/>
</dbReference>
<dbReference type="PIRSF" id="PIRSF006487">
    <property type="entry name" value="GcvT"/>
    <property type="match status" value="1"/>
</dbReference>
<dbReference type="SUPFAM" id="SSF101790">
    <property type="entry name" value="Aminomethyltransferase beta-barrel domain"/>
    <property type="match status" value="1"/>
</dbReference>
<dbReference type="SUPFAM" id="SSF103025">
    <property type="entry name" value="Folate-binding domain"/>
    <property type="match status" value="1"/>
</dbReference>
<accession>A3PFH6</accession>
<protein>
    <recommendedName>
        <fullName evidence="1">Aminomethyltransferase</fullName>
        <ecNumber evidence="1">2.1.2.10</ecNumber>
    </recommendedName>
    <alternativeName>
        <fullName evidence="1">Glycine cleavage system T protein</fullName>
    </alternativeName>
</protein>